<feature type="chain" id="PRO_0000254700" description="Cytochrome b">
    <location>
        <begin position="1"/>
        <end position="379"/>
    </location>
</feature>
<feature type="transmembrane region" description="Helical" evidence="2">
    <location>
        <begin position="33"/>
        <end position="53"/>
    </location>
</feature>
<feature type="transmembrane region" description="Helical" evidence="2">
    <location>
        <begin position="77"/>
        <end position="98"/>
    </location>
</feature>
<feature type="transmembrane region" description="Helical" evidence="2">
    <location>
        <begin position="113"/>
        <end position="133"/>
    </location>
</feature>
<feature type="transmembrane region" description="Helical" evidence="2">
    <location>
        <begin position="178"/>
        <end position="198"/>
    </location>
</feature>
<feature type="transmembrane region" description="Helical" evidence="2">
    <location>
        <begin position="226"/>
        <end position="246"/>
    </location>
</feature>
<feature type="transmembrane region" description="Helical" evidence="2">
    <location>
        <begin position="288"/>
        <end position="308"/>
    </location>
</feature>
<feature type="transmembrane region" description="Helical" evidence="2">
    <location>
        <begin position="320"/>
        <end position="340"/>
    </location>
</feature>
<feature type="transmembrane region" description="Helical" evidence="2">
    <location>
        <begin position="347"/>
        <end position="367"/>
    </location>
</feature>
<feature type="binding site" description="axial binding residue" evidence="2">
    <location>
        <position position="83"/>
    </location>
    <ligand>
        <name>heme b</name>
        <dbReference type="ChEBI" id="CHEBI:60344"/>
        <label>b562</label>
    </ligand>
    <ligandPart>
        <name>Fe</name>
        <dbReference type="ChEBI" id="CHEBI:18248"/>
    </ligandPart>
</feature>
<feature type="binding site" description="axial binding residue" evidence="2">
    <location>
        <position position="97"/>
    </location>
    <ligand>
        <name>heme b</name>
        <dbReference type="ChEBI" id="CHEBI:60344"/>
        <label>b566</label>
    </ligand>
    <ligandPart>
        <name>Fe</name>
        <dbReference type="ChEBI" id="CHEBI:18248"/>
    </ligandPart>
</feature>
<feature type="binding site" description="axial binding residue" evidence="2">
    <location>
        <position position="182"/>
    </location>
    <ligand>
        <name>heme b</name>
        <dbReference type="ChEBI" id="CHEBI:60344"/>
        <label>b562</label>
    </ligand>
    <ligandPart>
        <name>Fe</name>
        <dbReference type="ChEBI" id="CHEBI:18248"/>
    </ligandPart>
</feature>
<feature type="binding site" description="axial binding residue" evidence="2">
    <location>
        <position position="196"/>
    </location>
    <ligand>
        <name>heme b</name>
        <dbReference type="ChEBI" id="CHEBI:60344"/>
        <label>b566</label>
    </ligand>
    <ligandPart>
        <name>Fe</name>
        <dbReference type="ChEBI" id="CHEBI:18248"/>
    </ligandPart>
</feature>
<feature type="binding site" evidence="2">
    <location>
        <position position="201"/>
    </location>
    <ligand>
        <name>a ubiquinone</name>
        <dbReference type="ChEBI" id="CHEBI:16389"/>
    </ligand>
</feature>
<sequence>MTNIRKSHPLIKIVNNSFIDLPAPSSISSWWNFGSLLGICLALQILTGLFLAMHYTSDTSTAFNSVAHICRDVNYGWMLRYLHANGASMFFICLYLHVGRGLYYGSYMFKETWNMGVILLFAVMATAFMGYVLPWGQMSFWGATVITNLLSAIPYIGTDLVEWIWGGFSVDKATLTRFFAFHFLLPFIISALVMVHLLFLHETGSNNPTGIPSDMDMIPFHPYYTIKDILGLFMMIWALLSLVLFMPDLLGDPDNYSPANPLNTPPHIKPEWYFLFAYAILRSIPNKLGGVLALALSILILIIIPLLHTSKQRSMIFRPLSQCSFWLLTADLLTLTWIGGQPVEHPYIIIGQLASILYFLIIIVIMPLAXLMENLLLKW</sequence>
<name>CYB_LAEWI</name>
<dbReference type="EMBL" id="AJ841964">
    <property type="protein sequence ID" value="CAH56557.1"/>
    <property type="molecule type" value="Genomic_DNA"/>
</dbReference>
<dbReference type="GO" id="GO:0005743">
    <property type="term" value="C:mitochondrial inner membrane"/>
    <property type="evidence" value="ECO:0007669"/>
    <property type="project" value="UniProtKB-SubCell"/>
</dbReference>
<dbReference type="GO" id="GO:0045275">
    <property type="term" value="C:respiratory chain complex III"/>
    <property type="evidence" value="ECO:0007669"/>
    <property type="project" value="InterPro"/>
</dbReference>
<dbReference type="GO" id="GO:0046872">
    <property type="term" value="F:metal ion binding"/>
    <property type="evidence" value="ECO:0007669"/>
    <property type="project" value="UniProtKB-KW"/>
</dbReference>
<dbReference type="GO" id="GO:0008121">
    <property type="term" value="F:ubiquinol-cytochrome-c reductase activity"/>
    <property type="evidence" value="ECO:0007669"/>
    <property type="project" value="InterPro"/>
</dbReference>
<dbReference type="GO" id="GO:0006122">
    <property type="term" value="P:mitochondrial electron transport, ubiquinol to cytochrome c"/>
    <property type="evidence" value="ECO:0007669"/>
    <property type="project" value="TreeGrafter"/>
</dbReference>
<dbReference type="CDD" id="cd00290">
    <property type="entry name" value="cytochrome_b_C"/>
    <property type="match status" value="1"/>
</dbReference>
<dbReference type="CDD" id="cd00284">
    <property type="entry name" value="Cytochrome_b_N"/>
    <property type="match status" value="1"/>
</dbReference>
<dbReference type="FunFam" id="1.20.810.10:FF:000002">
    <property type="entry name" value="Cytochrome b"/>
    <property type="match status" value="1"/>
</dbReference>
<dbReference type="Gene3D" id="1.20.810.10">
    <property type="entry name" value="Cytochrome Bc1 Complex, Chain C"/>
    <property type="match status" value="1"/>
</dbReference>
<dbReference type="InterPro" id="IPR005798">
    <property type="entry name" value="Cyt_b/b6_C"/>
</dbReference>
<dbReference type="InterPro" id="IPR036150">
    <property type="entry name" value="Cyt_b/b6_C_sf"/>
</dbReference>
<dbReference type="InterPro" id="IPR005797">
    <property type="entry name" value="Cyt_b/b6_N"/>
</dbReference>
<dbReference type="InterPro" id="IPR027387">
    <property type="entry name" value="Cytb/b6-like_sf"/>
</dbReference>
<dbReference type="InterPro" id="IPR030689">
    <property type="entry name" value="Cytochrome_b"/>
</dbReference>
<dbReference type="InterPro" id="IPR048260">
    <property type="entry name" value="Cytochrome_b_C_euk/bac"/>
</dbReference>
<dbReference type="InterPro" id="IPR048259">
    <property type="entry name" value="Cytochrome_b_N_euk/bac"/>
</dbReference>
<dbReference type="InterPro" id="IPR016174">
    <property type="entry name" value="Di-haem_cyt_TM"/>
</dbReference>
<dbReference type="PANTHER" id="PTHR19271">
    <property type="entry name" value="CYTOCHROME B"/>
    <property type="match status" value="1"/>
</dbReference>
<dbReference type="PANTHER" id="PTHR19271:SF16">
    <property type="entry name" value="CYTOCHROME B"/>
    <property type="match status" value="1"/>
</dbReference>
<dbReference type="Pfam" id="PF00032">
    <property type="entry name" value="Cytochrom_B_C"/>
    <property type="match status" value="1"/>
</dbReference>
<dbReference type="Pfam" id="PF00033">
    <property type="entry name" value="Cytochrome_B"/>
    <property type="match status" value="1"/>
</dbReference>
<dbReference type="PIRSF" id="PIRSF038885">
    <property type="entry name" value="COB"/>
    <property type="match status" value="1"/>
</dbReference>
<dbReference type="SUPFAM" id="SSF81648">
    <property type="entry name" value="a domain/subunit of cytochrome bc1 complex (Ubiquinol-cytochrome c reductase)"/>
    <property type="match status" value="1"/>
</dbReference>
<dbReference type="SUPFAM" id="SSF81342">
    <property type="entry name" value="Transmembrane di-heme cytochromes"/>
    <property type="match status" value="1"/>
</dbReference>
<dbReference type="PROSITE" id="PS51003">
    <property type="entry name" value="CYTB_CTER"/>
    <property type="match status" value="1"/>
</dbReference>
<dbReference type="PROSITE" id="PS51002">
    <property type="entry name" value="CYTB_NTER"/>
    <property type="match status" value="1"/>
</dbReference>
<gene>
    <name type="primary">MT-CYB</name>
    <name type="synonym">COB</name>
    <name type="synonym">CYTB</name>
    <name type="synonym">MTCYB</name>
</gene>
<geneLocation type="mitochondrion"/>
<proteinExistence type="inferred from homology"/>
<organism>
    <name type="scientific">Laephotis wintoni</name>
    <name type="common">De Winton's long-eared bat</name>
    <dbReference type="NCBI Taxonomy" id="294650"/>
    <lineage>
        <taxon>Eukaryota</taxon>
        <taxon>Metazoa</taxon>
        <taxon>Chordata</taxon>
        <taxon>Craniata</taxon>
        <taxon>Vertebrata</taxon>
        <taxon>Euteleostomi</taxon>
        <taxon>Mammalia</taxon>
        <taxon>Eutheria</taxon>
        <taxon>Laurasiatheria</taxon>
        <taxon>Chiroptera</taxon>
        <taxon>Yangochiroptera</taxon>
        <taxon>Vespertilionidae</taxon>
        <taxon>Laephotis</taxon>
    </lineage>
</organism>
<accession>Q5F4F5</accession>
<comment type="function">
    <text evidence="2">Component of the ubiquinol-cytochrome c reductase complex (complex III or cytochrome b-c1 complex) that is part of the mitochondrial respiratory chain. The b-c1 complex mediates electron transfer from ubiquinol to cytochrome c. Contributes to the generation of a proton gradient across the mitochondrial membrane that is then used for ATP synthesis.</text>
</comment>
<comment type="cofactor">
    <cofactor evidence="2">
        <name>heme b</name>
        <dbReference type="ChEBI" id="CHEBI:60344"/>
    </cofactor>
    <text evidence="2">Binds 2 heme b groups non-covalently.</text>
</comment>
<comment type="subunit">
    <text evidence="2">The cytochrome bc1 complex contains 11 subunits: 3 respiratory subunits (MT-CYB, CYC1 and UQCRFS1), 2 core proteins (UQCRC1 and UQCRC2) and 6 low-molecular weight proteins (UQCRH/QCR6, UQCRB/QCR7, UQCRQ/QCR8, UQCR10/QCR9, UQCR11/QCR10 and a cleavage product of UQCRFS1). This cytochrome bc1 complex then forms a dimer.</text>
</comment>
<comment type="subcellular location">
    <subcellularLocation>
        <location evidence="2">Mitochondrion inner membrane</location>
        <topology evidence="2">Multi-pass membrane protein</topology>
    </subcellularLocation>
</comment>
<comment type="miscellaneous">
    <text evidence="1">Heme 1 (or BL or b562) is low-potential and absorbs at about 562 nm, and heme 2 (or BH or b566) is high-potential and absorbs at about 566 nm.</text>
</comment>
<comment type="similarity">
    <text evidence="3 4">Belongs to the cytochrome b family.</text>
</comment>
<comment type="caution">
    <text evidence="2">The full-length protein contains only eight transmembrane helices, not nine as predicted by bioinformatics tools.</text>
</comment>
<evidence type="ECO:0000250" key="1"/>
<evidence type="ECO:0000250" key="2">
    <source>
        <dbReference type="UniProtKB" id="P00157"/>
    </source>
</evidence>
<evidence type="ECO:0000255" key="3">
    <source>
        <dbReference type="PROSITE-ProRule" id="PRU00967"/>
    </source>
</evidence>
<evidence type="ECO:0000255" key="4">
    <source>
        <dbReference type="PROSITE-ProRule" id="PRU00968"/>
    </source>
</evidence>
<reference key="1">
    <citation type="journal article" date="2004" name="Acta Chiropt.">
        <title>Phylogeny of African myotis bats (Chiroptera, Vespertilionidae) inferred from cytochrome b sequences.</title>
        <authorList>
            <person name="Stadelmann B."/>
            <person name="Jacobs D.S."/>
            <person name="Schoeman C."/>
            <person name="Ruedi M."/>
        </authorList>
    </citation>
    <scope>NUCLEOTIDE SEQUENCE [GENOMIC DNA]</scope>
    <source>
        <tissue>Wing</tissue>
    </source>
</reference>
<protein>
    <recommendedName>
        <fullName>Cytochrome b</fullName>
    </recommendedName>
    <alternativeName>
        <fullName>Complex III subunit 3</fullName>
    </alternativeName>
    <alternativeName>
        <fullName>Complex III subunit III</fullName>
    </alternativeName>
    <alternativeName>
        <fullName>Cytochrome b-c1 complex subunit 3</fullName>
    </alternativeName>
    <alternativeName>
        <fullName>Ubiquinol-cytochrome-c reductase complex cytochrome b subunit</fullName>
    </alternativeName>
</protein>
<keyword id="KW-0249">Electron transport</keyword>
<keyword id="KW-0349">Heme</keyword>
<keyword id="KW-0408">Iron</keyword>
<keyword id="KW-0472">Membrane</keyword>
<keyword id="KW-0479">Metal-binding</keyword>
<keyword id="KW-0496">Mitochondrion</keyword>
<keyword id="KW-0999">Mitochondrion inner membrane</keyword>
<keyword id="KW-0679">Respiratory chain</keyword>
<keyword id="KW-0812">Transmembrane</keyword>
<keyword id="KW-1133">Transmembrane helix</keyword>
<keyword id="KW-0813">Transport</keyword>
<keyword id="KW-0830">Ubiquinone</keyword>